<reference key="1">
    <citation type="journal article" date="2004" name="Nucleic Acids Res.">
        <title>Unique features revealed by the genome sequence of Acinetobacter sp. ADP1, a versatile and naturally transformation competent bacterium.</title>
        <authorList>
            <person name="Barbe V."/>
            <person name="Vallenet D."/>
            <person name="Fonknechten N."/>
            <person name="Kreimeyer A."/>
            <person name="Oztas S."/>
            <person name="Labarre L."/>
            <person name="Cruveiller S."/>
            <person name="Robert C."/>
            <person name="Duprat S."/>
            <person name="Wincker P."/>
            <person name="Ornston L.N."/>
            <person name="Weissenbach J."/>
            <person name="Marliere P."/>
            <person name="Cohen G.N."/>
            <person name="Medigue C."/>
        </authorList>
    </citation>
    <scope>NUCLEOTIDE SEQUENCE [LARGE SCALE GENOMIC DNA]</scope>
    <source>
        <strain>ATCC 33305 / BD413 / ADP1</strain>
    </source>
</reference>
<gene>
    <name evidence="1" type="primary">dxr</name>
    <name type="ordered locus">ACIAD1376</name>
</gene>
<proteinExistence type="inferred from homology"/>
<keyword id="KW-0414">Isoprene biosynthesis</keyword>
<keyword id="KW-0464">Manganese</keyword>
<keyword id="KW-0479">Metal-binding</keyword>
<keyword id="KW-0521">NADP</keyword>
<keyword id="KW-0560">Oxidoreductase</keyword>
<evidence type="ECO:0000255" key="1">
    <source>
        <dbReference type="HAMAP-Rule" id="MF_00183"/>
    </source>
</evidence>
<feature type="chain" id="PRO_0000163594" description="1-deoxy-D-xylulose 5-phosphate reductoisomerase">
    <location>
        <begin position="1"/>
        <end position="398"/>
    </location>
</feature>
<feature type="binding site" evidence="1">
    <location>
        <position position="11"/>
    </location>
    <ligand>
        <name>NADPH</name>
        <dbReference type="ChEBI" id="CHEBI:57783"/>
    </ligand>
</feature>
<feature type="binding site" evidence="1">
    <location>
        <position position="12"/>
    </location>
    <ligand>
        <name>NADPH</name>
        <dbReference type="ChEBI" id="CHEBI:57783"/>
    </ligand>
</feature>
<feature type="binding site" evidence="1">
    <location>
        <position position="13"/>
    </location>
    <ligand>
        <name>NADPH</name>
        <dbReference type="ChEBI" id="CHEBI:57783"/>
    </ligand>
</feature>
<feature type="binding site" evidence="1">
    <location>
        <position position="14"/>
    </location>
    <ligand>
        <name>NADPH</name>
        <dbReference type="ChEBI" id="CHEBI:57783"/>
    </ligand>
</feature>
<feature type="binding site" evidence="1">
    <location>
        <position position="125"/>
    </location>
    <ligand>
        <name>NADPH</name>
        <dbReference type="ChEBI" id="CHEBI:57783"/>
    </ligand>
</feature>
<feature type="binding site" evidence="1">
    <location>
        <position position="126"/>
    </location>
    <ligand>
        <name>1-deoxy-D-xylulose 5-phosphate</name>
        <dbReference type="ChEBI" id="CHEBI:57792"/>
    </ligand>
</feature>
<feature type="binding site" evidence="1">
    <location>
        <position position="127"/>
    </location>
    <ligand>
        <name>NADPH</name>
        <dbReference type="ChEBI" id="CHEBI:57783"/>
    </ligand>
</feature>
<feature type="binding site" evidence="1">
    <location>
        <position position="151"/>
    </location>
    <ligand>
        <name>Mn(2+)</name>
        <dbReference type="ChEBI" id="CHEBI:29035"/>
    </ligand>
</feature>
<feature type="binding site" evidence="1">
    <location>
        <position position="152"/>
    </location>
    <ligand>
        <name>1-deoxy-D-xylulose 5-phosphate</name>
        <dbReference type="ChEBI" id="CHEBI:57792"/>
    </ligand>
</feature>
<feature type="binding site" evidence="1">
    <location>
        <position position="153"/>
    </location>
    <ligand>
        <name>1-deoxy-D-xylulose 5-phosphate</name>
        <dbReference type="ChEBI" id="CHEBI:57792"/>
    </ligand>
</feature>
<feature type="binding site" evidence="1">
    <location>
        <position position="153"/>
    </location>
    <ligand>
        <name>Mn(2+)</name>
        <dbReference type="ChEBI" id="CHEBI:29035"/>
    </ligand>
</feature>
<feature type="binding site" evidence="1">
    <location>
        <position position="186"/>
    </location>
    <ligand>
        <name>1-deoxy-D-xylulose 5-phosphate</name>
        <dbReference type="ChEBI" id="CHEBI:57792"/>
    </ligand>
</feature>
<feature type="binding site" evidence="1">
    <location>
        <position position="209"/>
    </location>
    <ligand>
        <name>1-deoxy-D-xylulose 5-phosphate</name>
        <dbReference type="ChEBI" id="CHEBI:57792"/>
    </ligand>
</feature>
<feature type="binding site" evidence="1">
    <location>
        <position position="215"/>
    </location>
    <ligand>
        <name>NADPH</name>
        <dbReference type="ChEBI" id="CHEBI:57783"/>
    </ligand>
</feature>
<feature type="binding site" evidence="1">
    <location>
        <position position="222"/>
    </location>
    <ligand>
        <name>1-deoxy-D-xylulose 5-phosphate</name>
        <dbReference type="ChEBI" id="CHEBI:57792"/>
    </ligand>
</feature>
<feature type="binding site" evidence="1">
    <location>
        <position position="227"/>
    </location>
    <ligand>
        <name>1-deoxy-D-xylulose 5-phosphate</name>
        <dbReference type="ChEBI" id="CHEBI:57792"/>
    </ligand>
</feature>
<feature type="binding site" evidence="1">
    <location>
        <position position="228"/>
    </location>
    <ligand>
        <name>1-deoxy-D-xylulose 5-phosphate</name>
        <dbReference type="ChEBI" id="CHEBI:57792"/>
    </ligand>
</feature>
<feature type="binding site" evidence="1">
    <location>
        <position position="231"/>
    </location>
    <ligand>
        <name>1-deoxy-D-xylulose 5-phosphate</name>
        <dbReference type="ChEBI" id="CHEBI:57792"/>
    </ligand>
</feature>
<feature type="binding site" evidence="1">
    <location>
        <position position="231"/>
    </location>
    <ligand>
        <name>Mn(2+)</name>
        <dbReference type="ChEBI" id="CHEBI:29035"/>
    </ligand>
</feature>
<accession>Q6FCG9</accession>
<comment type="function">
    <text evidence="1">Catalyzes the NADPH-dependent rearrangement and reduction of 1-deoxy-D-xylulose-5-phosphate (DXP) to 2-C-methyl-D-erythritol 4-phosphate (MEP).</text>
</comment>
<comment type="catalytic activity">
    <reaction evidence="1">
        <text>2-C-methyl-D-erythritol 4-phosphate + NADP(+) = 1-deoxy-D-xylulose 5-phosphate + NADPH + H(+)</text>
        <dbReference type="Rhea" id="RHEA:13717"/>
        <dbReference type="ChEBI" id="CHEBI:15378"/>
        <dbReference type="ChEBI" id="CHEBI:57783"/>
        <dbReference type="ChEBI" id="CHEBI:57792"/>
        <dbReference type="ChEBI" id="CHEBI:58262"/>
        <dbReference type="ChEBI" id="CHEBI:58349"/>
        <dbReference type="EC" id="1.1.1.267"/>
    </reaction>
    <physiologicalReaction direction="right-to-left" evidence="1">
        <dbReference type="Rhea" id="RHEA:13719"/>
    </physiologicalReaction>
</comment>
<comment type="cofactor">
    <cofactor evidence="1">
        <name>Mg(2+)</name>
        <dbReference type="ChEBI" id="CHEBI:18420"/>
    </cofactor>
    <cofactor evidence="1">
        <name>Mn(2+)</name>
        <dbReference type="ChEBI" id="CHEBI:29035"/>
    </cofactor>
</comment>
<comment type="pathway">
    <text evidence="1">Isoprenoid biosynthesis; isopentenyl diphosphate biosynthesis via DXP pathway; isopentenyl diphosphate from 1-deoxy-D-xylulose 5-phosphate: step 1/6.</text>
</comment>
<comment type="similarity">
    <text evidence="1">Belongs to the DXR family.</text>
</comment>
<protein>
    <recommendedName>
        <fullName evidence="1">1-deoxy-D-xylulose 5-phosphate reductoisomerase</fullName>
        <shortName evidence="1">DXP reductoisomerase</shortName>
        <ecNumber evidence="1">1.1.1.267</ecNumber>
    </recommendedName>
    <alternativeName>
        <fullName evidence="1">1-deoxyxylulose-5-phosphate reductoisomerase</fullName>
    </alternativeName>
    <alternativeName>
        <fullName evidence="1">2-C-methyl-D-erythritol 4-phosphate synthase</fullName>
    </alternativeName>
</protein>
<name>DXR_ACIAD</name>
<sequence length="398" mass="43383">MTQSVCILGVTGSIGQSTLKVLAQHPDKYSIYAITAHSRIQELVEICKQFKPKRVVVPDEHIDQLRQLLLQAGLADIDILSGTTGLVSVAQDEAVDVVMAAIVGAAGLLPTLAAVKAGKRVLLANKEALVMSGNIMMQAARDHQALLLPVDSEHNAIFQSLPSNYLTLENTGQPQLGVSRILLTASGGPFLDYPLEQLSEVTPQQACKHPNWSMGQKISVDSATLMNKGLELIEACHLFSISEHFVTVVVHPQSIIHSMVQYIDGSTLAQMGNPDMCTPIAHALAWPDRLQTHVPALDLFTHTHLDFREPDTNKFPALNLARQAMRAGGLSPCILNAANEIAVDAFLKLQIKFTVIPEVIEHVLNHVQNDTAVNIEQVLETDMIARQIAHQYVNQIRG</sequence>
<organism>
    <name type="scientific">Acinetobacter baylyi (strain ATCC 33305 / BD413 / ADP1)</name>
    <dbReference type="NCBI Taxonomy" id="62977"/>
    <lineage>
        <taxon>Bacteria</taxon>
        <taxon>Pseudomonadati</taxon>
        <taxon>Pseudomonadota</taxon>
        <taxon>Gammaproteobacteria</taxon>
        <taxon>Moraxellales</taxon>
        <taxon>Moraxellaceae</taxon>
        <taxon>Acinetobacter</taxon>
    </lineage>
</organism>
<dbReference type="EC" id="1.1.1.267" evidence="1"/>
<dbReference type="EMBL" id="CR543861">
    <property type="protein sequence ID" value="CAG68242.1"/>
    <property type="molecule type" value="Genomic_DNA"/>
</dbReference>
<dbReference type="SMR" id="Q6FCG9"/>
<dbReference type="STRING" id="202950.GCA_001485005_01133"/>
<dbReference type="GeneID" id="45233791"/>
<dbReference type="KEGG" id="aci:ACIAD1376"/>
<dbReference type="eggNOG" id="COG0743">
    <property type="taxonomic scope" value="Bacteria"/>
</dbReference>
<dbReference type="HOGENOM" id="CLU_035714_4_0_6"/>
<dbReference type="OrthoDB" id="9806546at2"/>
<dbReference type="BioCyc" id="ASP62977:ACIAD_RS06345-MONOMER"/>
<dbReference type="UniPathway" id="UPA00056">
    <property type="reaction ID" value="UER00092"/>
</dbReference>
<dbReference type="Proteomes" id="UP000000430">
    <property type="component" value="Chromosome"/>
</dbReference>
<dbReference type="GO" id="GO:0030604">
    <property type="term" value="F:1-deoxy-D-xylulose-5-phosphate reductoisomerase activity"/>
    <property type="evidence" value="ECO:0007669"/>
    <property type="project" value="UniProtKB-UniRule"/>
</dbReference>
<dbReference type="GO" id="GO:0030145">
    <property type="term" value="F:manganese ion binding"/>
    <property type="evidence" value="ECO:0007669"/>
    <property type="project" value="TreeGrafter"/>
</dbReference>
<dbReference type="GO" id="GO:0070402">
    <property type="term" value="F:NADPH binding"/>
    <property type="evidence" value="ECO:0007669"/>
    <property type="project" value="InterPro"/>
</dbReference>
<dbReference type="GO" id="GO:0051484">
    <property type="term" value="P:isopentenyl diphosphate biosynthetic process, methylerythritol 4-phosphate pathway involved in terpenoid biosynthetic process"/>
    <property type="evidence" value="ECO:0007669"/>
    <property type="project" value="TreeGrafter"/>
</dbReference>
<dbReference type="FunFam" id="3.40.50.720:FF:000045">
    <property type="entry name" value="1-deoxy-D-xylulose 5-phosphate reductoisomerase"/>
    <property type="match status" value="1"/>
</dbReference>
<dbReference type="Gene3D" id="1.10.1740.10">
    <property type="match status" value="1"/>
</dbReference>
<dbReference type="Gene3D" id="3.40.50.720">
    <property type="entry name" value="NAD(P)-binding Rossmann-like Domain"/>
    <property type="match status" value="1"/>
</dbReference>
<dbReference type="HAMAP" id="MF_00183">
    <property type="entry name" value="DXP_reductoisom"/>
    <property type="match status" value="1"/>
</dbReference>
<dbReference type="InterPro" id="IPR003821">
    <property type="entry name" value="DXP_reductoisomerase"/>
</dbReference>
<dbReference type="InterPro" id="IPR013644">
    <property type="entry name" value="DXP_reductoisomerase_C"/>
</dbReference>
<dbReference type="InterPro" id="IPR013512">
    <property type="entry name" value="DXP_reductoisomerase_N"/>
</dbReference>
<dbReference type="InterPro" id="IPR026877">
    <property type="entry name" value="DXPR_C"/>
</dbReference>
<dbReference type="InterPro" id="IPR036169">
    <property type="entry name" value="DXPR_C_sf"/>
</dbReference>
<dbReference type="InterPro" id="IPR036291">
    <property type="entry name" value="NAD(P)-bd_dom_sf"/>
</dbReference>
<dbReference type="NCBIfam" id="TIGR00243">
    <property type="entry name" value="Dxr"/>
    <property type="match status" value="1"/>
</dbReference>
<dbReference type="NCBIfam" id="NF003938">
    <property type="entry name" value="PRK05447.1-1"/>
    <property type="match status" value="1"/>
</dbReference>
<dbReference type="NCBIfam" id="NF009114">
    <property type="entry name" value="PRK12464.1"/>
    <property type="match status" value="1"/>
</dbReference>
<dbReference type="PANTHER" id="PTHR30525">
    <property type="entry name" value="1-DEOXY-D-XYLULOSE 5-PHOSPHATE REDUCTOISOMERASE"/>
    <property type="match status" value="1"/>
</dbReference>
<dbReference type="PANTHER" id="PTHR30525:SF0">
    <property type="entry name" value="1-DEOXY-D-XYLULOSE 5-PHOSPHATE REDUCTOISOMERASE, CHLOROPLASTIC"/>
    <property type="match status" value="1"/>
</dbReference>
<dbReference type="Pfam" id="PF08436">
    <property type="entry name" value="DXP_redisom_C"/>
    <property type="match status" value="1"/>
</dbReference>
<dbReference type="Pfam" id="PF02670">
    <property type="entry name" value="DXP_reductoisom"/>
    <property type="match status" value="1"/>
</dbReference>
<dbReference type="Pfam" id="PF13288">
    <property type="entry name" value="DXPR_C"/>
    <property type="match status" value="1"/>
</dbReference>
<dbReference type="PIRSF" id="PIRSF006205">
    <property type="entry name" value="Dxp_reductismrs"/>
    <property type="match status" value="1"/>
</dbReference>
<dbReference type="SUPFAM" id="SSF69055">
    <property type="entry name" value="1-deoxy-D-xylulose-5-phosphate reductoisomerase, C-terminal domain"/>
    <property type="match status" value="1"/>
</dbReference>
<dbReference type="SUPFAM" id="SSF55347">
    <property type="entry name" value="Glyceraldehyde-3-phosphate dehydrogenase-like, C-terminal domain"/>
    <property type="match status" value="1"/>
</dbReference>
<dbReference type="SUPFAM" id="SSF51735">
    <property type="entry name" value="NAD(P)-binding Rossmann-fold domains"/>
    <property type="match status" value="1"/>
</dbReference>